<evidence type="ECO:0000255" key="1">
    <source>
        <dbReference type="HAMAP-Rule" id="MF_00093"/>
    </source>
</evidence>
<evidence type="ECO:0000256" key="2">
    <source>
        <dbReference type="SAM" id="MobiDB-lite"/>
    </source>
</evidence>
<comment type="function">
    <text evidence="1">Peptide chain release factor 1 directs the termination of translation in response to the peptide chain termination codons UAG and UAA.</text>
</comment>
<comment type="subcellular location">
    <subcellularLocation>
        <location evidence="1">Cytoplasm</location>
    </subcellularLocation>
</comment>
<comment type="PTM">
    <text evidence="1">Methylated by PrmC. Methylation increases the termination efficiency of RF1.</text>
</comment>
<comment type="similarity">
    <text evidence="1">Belongs to the prokaryotic/mitochondrial release factor family.</text>
</comment>
<sequence length="364" mass="41121">MLNPSIERKLEGLVERYQEVQALLGEPDVISDQNRFRSLSREYSQLEEVVGCFEEYRQNQDDQAAAKDMAEDDDAEMREMAEEELKEARKAEEELENRLQLLLLPKDPNDDRSCYLEIRAGAGGDEASIFAGDLFRMYSRYAEKNGWKVNIVSASDGEHGGYKEIIAHMSGDGVYGRMKFESGGHRVQRVPETESQGRIHTSACTVAVLPEIPEAEAVEINPADLRVDTYRASGAGGQHVNRTDSAIRLTHIPTGVVVECQEERSQHKNRAKAMSVLQARIQRLEDEKRQAEEDSTRRNLVGSGDRSERIRTYNYPQSRVTDHRINLTLYRLDEVLTGDIDLILDAIITEHQADQLAALSEGQQ</sequence>
<keyword id="KW-0963">Cytoplasm</keyword>
<keyword id="KW-0488">Methylation</keyword>
<keyword id="KW-0648">Protein biosynthesis</keyword>
<keyword id="KW-1185">Reference proteome</keyword>
<reference key="1">
    <citation type="journal article" date="2004" name="Proc. Natl. Acad. Sci. U.S.A.">
        <title>Genome sequence of the deep-sea gamma-proteobacterium Idiomarina loihiensis reveals amino acid fermentation as a source of carbon and energy.</title>
        <authorList>
            <person name="Hou S."/>
            <person name="Saw J.H."/>
            <person name="Lee K.S."/>
            <person name="Freitas T.A."/>
            <person name="Belisle C."/>
            <person name="Kawarabayasi Y."/>
            <person name="Donachie S.P."/>
            <person name="Pikina A."/>
            <person name="Galperin M.Y."/>
            <person name="Koonin E.V."/>
            <person name="Makarova K.S."/>
            <person name="Omelchenko M.V."/>
            <person name="Sorokin A."/>
            <person name="Wolf Y.I."/>
            <person name="Li Q.X."/>
            <person name="Keum Y.S."/>
            <person name="Campbell S."/>
            <person name="Denery J."/>
            <person name="Aizawa S."/>
            <person name="Shibata S."/>
            <person name="Malahoff A."/>
            <person name="Alam M."/>
        </authorList>
    </citation>
    <scope>NUCLEOTIDE SEQUENCE [LARGE SCALE GENOMIC DNA]</scope>
    <source>
        <strain>ATCC BAA-735 / DSM 15497 / L2-TR</strain>
    </source>
</reference>
<organism>
    <name type="scientific">Idiomarina loihiensis (strain ATCC BAA-735 / DSM 15497 / L2-TR)</name>
    <dbReference type="NCBI Taxonomy" id="283942"/>
    <lineage>
        <taxon>Bacteria</taxon>
        <taxon>Pseudomonadati</taxon>
        <taxon>Pseudomonadota</taxon>
        <taxon>Gammaproteobacteria</taxon>
        <taxon>Alteromonadales</taxon>
        <taxon>Idiomarinaceae</taxon>
        <taxon>Idiomarina</taxon>
    </lineage>
</organism>
<gene>
    <name evidence="1" type="primary">prfA</name>
    <name type="ordered locus">IL0925</name>
</gene>
<protein>
    <recommendedName>
        <fullName evidence="1">Peptide chain release factor 1</fullName>
        <shortName evidence="1">RF-1</shortName>
    </recommendedName>
</protein>
<accession>Q5QUZ8</accession>
<feature type="chain" id="PRO_0000177683" description="Peptide chain release factor 1">
    <location>
        <begin position="1"/>
        <end position="364"/>
    </location>
</feature>
<feature type="region of interest" description="Disordered" evidence="2">
    <location>
        <begin position="286"/>
        <end position="315"/>
    </location>
</feature>
<feature type="compositionally biased region" description="Basic and acidic residues" evidence="2">
    <location>
        <begin position="286"/>
        <end position="297"/>
    </location>
</feature>
<feature type="modified residue" description="N5-methylglutamine" evidence="1">
    <location>
        <position position="238"/>
    </location>
</feature>
<name>RF1_IDILO</name>
<proteinExistence type="inferred from homology"/>
<dbReference type="EMBL" id="AE017340">
    <property type="protein sequence ID" value="AAV81765.1"/>
    <property type="molecule type" value="Genomic_DNA"/>
</dbReference>
<dbReference type="SMR" id="Q5QUZ8"/>
<dbReference type="STRING" id="283942.IL0925"/>
<dbReference type="KEGG" id="ilo:IL0925"/>
<dbReference type="eggNOG" id="COG0216">
    <property type="taxonomic scope" value="Bacteria"/>
</dbReference>
<dbReference type="HOGENOM" id="CLU_036856_0_1_6"/>
<dbReference type="Proteomes" id="UP000001171">
    <property type="component" value="Chromosome"/>
</dbReference>
<dbReference type="GO" id="GO:0005737">
    <property type="term" value="C:cytoplasm"/>
    <property type="evidence" value="ECO:0007669"/>
    <property type="project" value="UniProtKB-SubCell"/>
</dbReference>
<dbReference type="GO" id="GO:0016149">
    <property type="term" value="F:translation release factor activity, codon specific"/>
    <property type="evidence" value="ECO:0007669"/>
    <property type="project" value="UniProtKB-UniRule"/>
</dbReference>
<dbReference type="FunFam" id="3.30.160.20:FF:000004">
    <property type="entry name" value="Peptide chain release factor 1"/>
    <property type="match status" value="1"/>
</dbReference>
<dbReference type="FunFam" id="3.30.70.1660:FF:000002">
    <property type="entry name" value="Peptide chain release factor 1"/>
    <property type="match status" value="1"/>
</dbReference>
<dbReference type="FunFam" id="3.30.70.1660:FF:000004">
    <property type="entry name" value="Peptide chain release factor 1"/>
    <property type="match status" value="1"/>
</dbReference>
<dbReference type="Gene3D" id="3.30.160.20">
    <property type="match status" value="1"/>
</dbReference>
<dbReference type="Gene3D" id="3.30.70.1660">
    <property type="match status" value="1"/>
</dbReference>
<dbReference type="Gene3D" id="6.10.140.1950">
    <property type="match status" value="1"/>
</dbReference>
<dbReference type="HAMAP" id="MF_00093">
    <property type="entry name" value="Rel_fac_1"/>
    <property type="match status" value="1"/>
</dbReference>
<dbReference type="InterPro" id="IPR005139">
    <property type="entry name" value="PCRF"/>
</dbReference>
<dbReference type="InterPro" id="IPR000352">
    <property type="entry name" value="Pep_chain_release_fac_I"/>
</dbReference>
<dbReference type="InterPro" id="IPR045853">
    <property type="entry name" value="Pep_chain_release_fac_I_sf"/>
</dbReference>
<dbReference type="InterPro" id="IPR050057">
    <property type="entry name" value="Prokaryotic/Mito_RF"/>
</dbReference>
<dbReference type="InterPro" id="IPR004373">
    <property type="entry name" value="RF-1"/>
</dbReference>
<dbReference type="NCBIfam" id="TIGR00019">
    <property type="entry name" value="prfA"/>
    <property type="match status" value="1"/>
</dbReference>
<dbReference type="NCBIfam" id="NF001859">
    <property type="entry name" value="PRK00591.1"/>
    <property type="match status" value="1"/>
</dbReference>
<dbReference type="PANTHER" id="PTHR43804">
    <property type="entry name" value="LD18447P"/>
    <property type="match status" value="1"/>
</dbReference>
<dbReference type="PANTHER" id="PTHR43804:SF7">
    <property type="entry name" value="LD18447P"/>
    <property type="match status" value="1"/>
</dbReference>
<dbReference type="Pfam" id="PF03462">
    <property type="entry name" value="PCRF"/>
    <property type="match status" value="1"/>
</dbReference>
<dbReference type="Pfam" id="PF00472">
    <property type="entry name" value="RF-1"/>
    <property type="match status" value="1"/>
</dbReference>
<dbReference type="SMART" id="SM00937">
    <property type="entry name" value="PCRF"/>
    <property type="match status" value="1"/>
</dbReference>
<dbReference type="SUPFAM" id="SSF75620">
    <property type="entry name" value="Release factor"/>
    <property type="match status" value="1"/>
</dbReference>
<dbReference type="PROSITE" id="PS00745">
    <property type="entry name" value="RF_PROK_I"/>
    <property type="match status" value="1"/>
</dbReference>